<reference key="1">
    <citation type="journal article" date="2003" name="J. Bacteriol.">
        <title>Comparative analyses of the complete genome sequences of Pierce's disease and citrus variegated chlorosis strains of Xylella fastidiosa.</title>
        <authorList>
            <person name="Van Sluys M.A."/>
            <person name="de Oliveira M.C."/>
            <person name="Monteiro-Vitorello C.B."/>
            <person name="Miyaki C.Y."/>
            <person name="Furlan L.R."/>
            <person name="Camargo L.E.A."/>
            <person name="da Silva A.C.R."/>
            <person name="Moon D.H."/>
            <person name="Takita M.A."/>
            <person name="Lemos E.G.M."/>
            <person name="Machado M.A."/>
            <person name="Ferro M.I.T."/>
            <person name="da Silva F.R."/>
            <person name="Goldman M.H.S."/>
            <person name="Goldman G.H."/>
            <person name="Lemos M.V.F."/>
            <person name="El-Dorry H."/>
            <person name="Tsai S.M."/>
            <person name="Carrer H."/>
            <person name="Carraro D.M."/>
            <person name="de Oliveira R.C."/>
            <person name="Nunes L.R."/>
            <person name="Siqueira W.J."/>
            <person name="Coutinho L.L."/>
            <person name="Kimura E.T."/>
            <person name="Ferro E.S."/>
            <person name="Harakava R."/>
            <person name="Kuramae E.E."/>
            <person name="Marino C.L."/>
            <person name="Giglioti E."/>
            <person name="Abreu I.L."/>
            <person name="Alves L.M.C."/>
            <person name="do Amaral A.M."/>
            <person name="Baia G.S."/>
            <person name="Blanco S.R."/>
            <person name="Brito M.S."/>
            <person name="Cannavan F.S."/>
            <person name="Celestino A.V."/>
            <person name="da Cunha A.F."/>
            <person name="Fenille R.C."/>
            <person name="Ferro J.A."/>
            <person name="Formighieri E.F."/>
            <person name="Kishi L.T."/>
            <person name="Leoni S.G."/>
            <person name="Oliveira A.R."/>
            <person name="Rosa V.E. Jr."/>
            <person name="Sassaki F.T."/>
            <person name="Sena J.A.D."/>
            <person name="de Souza A.A."/>
            <person name="Truffi D."/>
            <person name="Tsukumo F."/>
            <person name="Yanai G.M."/>
            <person name="Zaros L.G."/>
            <person name="Civerolo E.L."/>
            <person name="Simpson A.J.G."/>
            <person name="Almeida N.F. Jr."/>
            <person name="Setubal J.C."/>
            <person name="Kitajima J.P."/>
        </authorList>
    </citation>
    <scope>NUCLEOTIDE SEQUENCE [LARGE SCALE GENOMIC DNA]</scope>
    <source>
        <strain>Temecula1 / ATCC 700964</strain>
    </source>
</reference>
<proteinExistence type="inferred from homology"/>
<name>PRMC_XYLFT</name>
<keyword id="KW-0489">Methyltransferase</keyword>
<keyword id="KW-1185">Reference proteome</keyword>
<keyword id="KW-0949">S-adenosyl-L-methionine</keyword>
<keyword id="KW-0808">Transferase</keyword>
<evidence type="ECO:0000255" key="1">
    <source>
        <dbReference type="HAMAP-Rule" id="MF_02126"/>
    </source>
</evidence>
<sequence length="275" mass="29329">MPSPIALLAAATERIERVDAEALLLHALDCDRAWLFTHGDIPLAAAATESFQALVEQRARGIPVAYLIGRRGFWTLDVIVSSATLIPRAETETLVEQALQRLDHASERRVADLGTGSGAIALAIACERPQAQVLATDNSAAALDIAARNASAHGLNHVVFREGNWYEALLGERFDLIVSNPPYIAVTDPHLTQGDLRFEPPSALISGGDGLDALRILAAGAPAHLRPGGWLVLEHGWDQGAAVRTLLHTAGLVAVATMQDLEARDRVTVGRCPGF</sequence>
<feature type="chain" id="PRO_0000157172" description="Release factor glutamine methyltransferase">
    <location>
        <begin position="1"/>
        <end position="275"/>
    </location>
</feature>
<feature type="binding site" evidence="1">
    <location>
        <begin position="114"/>
        <end position="118"/>
    </location>
    <ligand>
        <name>S-adenosyl-L-methionine</name>
        <dbReference type="ChEBI" id="CHEBI:59789"/>
    </ligand>
</feature>
<feature type="binding site" evidence="1">
    <location>
        <position position="137"/>
    </location>
    <ligand>
        <name>S-adenosyl-L-methionine</name>
        <dbReference type="ChEBI" id="CHEBI:59789"/>
    </ligand>
</feature>
<feature type="binding site" evidence="1">
    <location>
        <position position="165"/>
    </location>
    <ligand>
        <name>S-adenosyl-L-methionine</name>
        <dbReference type="ChEBI" id="CHEBI:59789"/>
    </ligand>
</feature>
<feature type="binding site" evidence="1">
    <location>
        <begin position="180"/>
        <end position="183"/>
    </location>
    <ligand>
        <name>substrate</name>
    </ligand>
</feature>
<feature type="binding site" evidence="1">
    <location>
        <position position="180"/>
    </location>
    <ligand>
        <name>S-adenosyl-L-methionine</name>
        <dbReference type="ChEBI" id="CHEBI:59789"/>
    </ligand>
</feature>
<comment type="function">
    <text evidence="1">Methylates the class 1 translation termination release factors RF1/PrfA and RF2/PrfB on the glutamine residue of the universally conserved GGQ motif.</text>
</comment>
<comment type="catalytic activity">
    <reaction evidence="1">
        <text>L-glutaminyl-[peptide chain release factor] + S-adenosyl-L-methionine = N(5)-methyl-L-glutaminyl-[peptide chain release factor] + S-adenosyl-L-homocysteine + H(+)</text>
        <dbReference type="Rhea" id="RHEA:42896"/>
        <dbReference type="Rhea" id="RHEA-COMP:10271"/>
        <dbReference type="Rhea" id="RHEA-COMP:10272"/>
        <dbReference type="ChEBI" id="CHEBI:15378"/>
        <dbReference type="ChEBI" id="CHEBI:30011"/>
        <dbReference type="ChEBI" id="CHEBI:57856"/>
        <dbReference type="ChEBI" id="CHEBI:59789"/>
        <dbReference type="ChEBI" id="CHEBI:61891"/>
        <dbReference type="EC" id="2.1.1.297"/>
    </reaction>
</comment>
<comment type="similarity">
    <text evidence="1">Belongs to the protein N5-glutamine methyltransferase family. PrmC subfamily.</text>
</comment>
<organism>
    <name type="scientific">Xylella fastidiosa (strain Temecula1 / ATCC 700964)</name>
    <dbReference type="NCBI Taxonomy" id="183190"/>
    <lineage>
        <taxon>Bacteria</taxon>
        <taxon>Pseudomonadati</taxon>
        <taxon>Pseudomonadota</taxon>
        <taxon>Gammaproteobacteria</taxon>
        <taxon>Lysobacterales</taxon>
        <taxon>Lysobacteraceae</taxon>
        <taxon>Xylella</taxon>
    </lineage>
</organism>
<accession>Q87DF7</accession>
<protein>
    <recommendedName>
        <fullName evidence="1">Release factor glutamine methyltransferase</fullName>
        <shortName evidence="1">RF MTase</shortName>
        <ecNumber evidence="1">2.1.1.297</ecNumber>
    </recommendedName>
    <alternativeName>
        <fullName>M.XfaHemK2P</fullName>
    </alternativeName>
    <alternativeName>
        <fullName evidence="1">N5-glutamine methyltransferase PrmC</fullName>
    </alternativeName>
    <alternativeName>
        <fullName evidence="1">Protein-(glutamine-N5) MTase PrmC</fullName>
    </alternativeName>
    <alternativeName>
        <fullName evidence="1">Protein-glutamine N-methyltransferase PrmC</fullName>
    </alternativeName>
</protein>
<dbReference type="EC" id="2.1.1.297" evidence="1"/>
<dbReference type="EMBL" id="AE009442">
    <property type="protein sequence ID" value="AAO28597.1"/>
    <property type="molecule type" value="Genomic_DNA"/>
</dbReference>
<dbReference type="RefSeq" id="WP_004088973.1">
    <property type="nucleotide sequence ID" value="NC_004556.1"/>
</dbReference>
<dbReference type="SMR" id="Q87DF7"/>
<dbReference type="GeneID" id="93904508"/>
<dbReference type="KEGG" id="xft:PD_0728"/>
<dbReference type="HOGENOM" id="CLU_018398_3_1_6"/>
<dbReference type="Proteomes" id="UP000002516">
    <property type="component" value="Chromosome"/>
</dbReference>
<dbReference type="GO" id="GO:0003676">
    <property type="term" value="F:nucleic acid binding"/>
    <property type="evidence" value="ECO:0007669"/>
    <property type="project" value="InterPro"/>
</dbReference>
<dbReference type="GO" id="GO:0102559">
    <property type="term" value="F:protein-(glutamine-N5) methyltransferase activity"/>
    <property type="evidence" value="ECO:0007669"/>
    <property type="project" value="UniProtKB-EC"/>
</dbReference>
<dbReference type="GO" id="GO:0036009">
    <property type="term" value="F:protein-glutamine N-methyltransferase activity"/>
    <property type="evidence" value="ECO:0007669"/>
    <property type="project" value="UniProtKB-UniRule"/>
</dbReference>
<dbReference type="GO" id="GO:0032259">
    <property type="term" value="P:methylation"/>
    <property type="evidence" value="ECO:0007669"/>
    <property type="project" value="UniProtKB-KW"/>
</dbReference>
<dbReference type="CDD" id="cd02440">
    <property type="entry name" value="AdoMet_MTases"/>
    <property type="match status" value="1"/>
</dbReference>
<dbReference type="FunFam" id="3.40.50.150:FF:000053">
    <property type="entry name" value="Release factor glutamine methyltransferase"/>
    <property type="match status" value="1"/>
</dbReference>
<dbReference type="Gene3D" id="1.10.8.10">
    <property type="entry name" value="DNA helicase RuvA subunit, C-terminal domain"/>
    <property type="match status" value="1"/>
</dbReference>
<dbReference type="Gene3D" id="3.40.50.150">
    <property type="entry name" value="Vaccinia Virus protein VP39"/>
    <property type="match status" value="1"/>
</dbReference>
<dbReference type="HAMAP" id="MF_02126">
    <property type="entry name" value="RF_methyltr_PrmC"/>
    <property type="match status" value="1"/>
</dbReference>
<dbReference type="InterPro" id="IPR002052">
    <property type="entry name" value="DNA_methylase_N6_adenine_CS"/>
</dbReference>
<dbReference type="InterPro" id="IPR004556">
    <property type="entry name" value="HemK-like"/>
</dbReference>
<dbReference type="InterPro" id="IPR050320">
    <property type="entry name" value="N5-glutamine_MTase"/>
</dbReference>
<dbReference type="InterPro" id="IPR040758">
    <property type="entry name" value="PrmC_N"/>
</dbReference>
<dbReference type="InterPro" id="IPR019874">
    <property type="entry name" value="RF_methyltr_PrmC"/>
</dbReference>
<dbReference type="InterPro" id="IPR029063">
    <property type="entry name" value="SAM-dependent_MTases_sf"/>
</dbReference>
<dbReference type="InterPro" id="IPR007848">
    <property type="entry name" value="Small_mtfrase_dom"/>
</dbReference>
<dbReference type="NCBIfam" id="TIGR00536">
    <property type="entry name" value="hemK_fam"/>
    <property type="match status" value="1"/>
</dbReference>
<dbReference type="NCBIfam" id="TIGR03534">
    <property type="entry name" value="RF_mod_PrmC"/>
    <property type="match status" value="1"/>
</dbReference>
<dbReference type="PANTHER" id="PTHR18895">
    <property type="entry name" value="HEMK METHYLTRANSFERASE"/>
    <property type="match status" value="1"/>
</dbReference>
<dbReference type="PANTHER" id="PTHR18895:SF74">
    <property type="entry name" value="MTRF1L RELEASE FACTOR GLUTAMINE METHYLTRANSFERASE"/>
    <property type="match status" value="1"/>
</dbReference>
<dbReference type="Pfam" id="PF05175">
    <property type="entry name" value="MTS"/>
    <property type="match status" value="1"/>
</dbReference>
<dbReference type="Pfam" id="PF17827">
    <property type="entry name" value="PrmC_N"/>
    <property type="match status" value="1"/>
</dbReference>
<dbReference type="SUPFAM" id="SSF53335">
    <property type="entry name" value="S-adenosyl-L-methionine-dependent methyltransferases"/>
    <property type="match status" value="1"/>
</dbReference>
<gene>
    <name evidence="1" type="primary">prmC</name>
    <name type="synonym">hemK</name>
    <name type="ordered locus">PD_0728</name>
</gene>